<organism>
    <name type="scientific">Methylobacterium sp. (strain 4-46)</name>
    <dbReference type="NCBI Taxonomy" id="426117"/>
    <lineage>
        <taxon>Bacteria</taxon>
        <taxon>Pseudomonadati</taxon>
        <taxon>Pseudomonadota</taxon>
        <taxon>Alphaproteobacteria</taxon>
        <taxon>Hyphomicrobiales</taxon>
        <taxon>Methylobacteriaceae</taxon>
        <taxon>Methylobacterium</taxon>
    </lineage>
</organism>
<protein>
    <recommendedName>
        <fullName evidence="1">Large ribosomal subunit protein uL23</fullName>
    </recommendedName>
    <alternativeName>
        <fullName evidence="2">50S ribosomal protein L23</fullName>
    </alternativeName>
</protein>
<proteinExistence type="inferred from homology"/>
<feature type="chain" id="PRO_1000144591" description="Large ribosomal subunit protein uL23">
    <location>
        <begin position="1"/>
        <end position="98"/>
    </location>
</feature>
<name>RL23_METS4</name>
<evidence type="ECO:0000255" key="1">
    <source>
        <dbReference type="HAMAP-Rule" id="MF_01369"/>
    </source>
</evidence>
<evidence type="ECO:0000305" key="2"/>
<accession>B0UHW7</accession>
<dbReference type="EMBL" id="CP000943">
    <property type="protein sequence ID" value="ACA14922.1"/>
    <property type="molecule type" value="Genomic_DNA"/>
</dbReference>
<dbReference type="RefSeq" id="WP_012330340.1">
    <property type="nucleotide sequence ID" value="NC_010511.1"/>
</dbReference>
<dbReference type="SMR" id="B0UHW7"/>
<dbReference type="STRING" id="426117.M446_0351"/>
<dbReference type="KEGG" id="met:M446_0351"/>
<dbReference type="eggNOG" id="COG0089">
    <property type="taxonomic scope" value="Bacteria"/>
</dbReference>
<dbReference type="HOGENOM" id="CLU_037562_3_1_5"/>
<dbReference type="GO" id="GO:1990904">
    <property type="term" value="C:ribonucleoprotein complex"/>
    <property type="evidence" value="ECO:0007669"/>
    <property type="project" value="UniProtKB-KW"/>
</dbReference>
<dbReference type="GO" id="GO:0005840">
    <property type="term" value="C:ribosome"/>
    <property type="evidence" value="ECO:0007669"/>
    <property type="project" value="UniProtKB-KW"/>
</dbReference>
<dbReference type="GO" id="GO:0019843">
    <property type="term" value="F:rRNA binding"/>
    <property type="evidence" value="ECO:0007669"/>
    <property type="project" value="UniProtKB-UniRule"/>
</dbReference>
<dbReference type="GO" id="GO:0003735">
    <property type="term" value="F:structural constituent of ribosome"/>
    <property type="evidence" value="ECO:0007669"/>
    <property type="project" value="InterPro"/>
</dbReference>
<dbReference type="GO" id="GO:0006412">
    <property type="term" value="P:translation"/>
    <property type="evidence" value="ECO:0007669"/>
    <property type="project" value="UniProtKB-UniRule"/>
</dbReference>
<dbReference type="FunFam" id="3.30.70.330:FF:000001">
    <property type="entry name" value="50S ribosomal protein L23"/>
    <property type="match status" value="1"/>
</dbReference>
<dbReference type="Gene3D" id="3.30.70.330">
    <property type="match status" value="1"/>
</dbReference>
<dbReference type="HAMAP" id="MF_01369_B">
    <property type="entry name" value="Ribosomal_uL23_B"/>
    <property type="match status" value="1"/>
</dbReference>
<dbReference type="InterPro" id="IPR012677">
    <property type="entry name" value="Nucleotide-bd_a/b_plait_sf"/>
</dbReference>
<dbReference type="InterPro" id="IPR013025">
    <property type="entry name" value="Ribosomal_uL23-like"/>
</dbReference>
<dbReference type="InterPro" id="IPR012678">
    <property type="entry name" value="Ribosomal_uL23/eL15/eS24_sf"/>
</dbReference>
<dbReference type="InterPro" id="IPR001014">
    <property type="entry name" value="Ribosomal_uL23_CS"/>
</dbReference>
<dbReference type="NCBIfam" id="NF004359">
    <property type="entry name" value="PRK05738.1-3"/>
    <property type="match status" value="1"/>
</dbReference>
<dbReference type="NCBIfam" id="NF004360">
    <property type="entry name" value="PRK05738.1-5"/>
    <property type="match status" value="1"/>
</dbReference>
<dbReference type="NCBIfam" id="NF004363">
    <property type="entry name" value="PRK05738.2-4"/>
    <property type="match status" value="1"/>
</dbReference>
<dbReference type="NCBIfam" id="NF004366">
    <property type="entry name" value="PRK05738.3-2"/>
    <property type="match status" value="1"/>
</dbReference>
<dbReference type="PANTHER" id="PTHR11620">
    <property type="entry name" value="60S RIBOSOMAL PROTEIN L23A"/>
    <property type="match status" value="1"/>
</dbReference>
<dbReference type="Pfam" id="PF00276">
    <property type="entry name" value="Ribosomal_L23"/>
    <property type="match status" value="1"/>
</dbReference>
<dbReference type="SUPFAM" id="SSF54189">
    <property type="entry name" value="Ribosomal proteins S24e, L23 and L15e"/>
    <property type="match status" value="1"/>
</dbReference>
<dbReference type="PROSITE" id="PS00050">
    <property type="entry name" value="RIBOSOMAL_L23"/>
    <property type="match status" value="1"/>
</dbReference>
<reference key="1">
    <citation type="submission" date="2008-02" db="EMBL/GenBank/DDBJ databases">
        <title>Complete sequence of chromosome of Methylobacterium sp. 4-46.</title>
        <authorList>
            <consortium name="US DOE Joint Genome Institute"/>
            <person name="Copeland A."/>
            <person name="Lucas S."/>
            <person name="Lapidus A."/>
            <person name="Glavina del Rio T."/>
            <person name="Dalin E."/>
            <person name="Tice H."/>
            <person name="Bruce D."/>
            <person name="Goodwin L."/>
            <person name="Pitluck S."/>
            <person name="Chertkov O."/>
            <person name="Brettin T."/>
            <person name="Detter J.C."/>
            <person name="Han C."/>
            <person name="Kuske C.R."/>
            <person name="Schmutz J."/>
            <person name="Larimer F."/>
            <person name="Land M."/>
            <person name="Hauser L."/>
            <person name="Kyrpides N."/>
            <person name="Ivanova N."/>
            <person name="Marx C.J."/>
            <person name="Richardson P."/>
        </authorList>
    </citation>
    <scope>NUCLEOTIDE SEQUENCE [LARGE SCALE GENOMIC DNA]</scope>
    <source>
        <strain>4-46</strain>
    </source>
</reference>
<sequence>MSADPRHYDVIVAPVITEKATNLSELNKVVFRVAPKATKPQIKEAVERLFEVKVKSVNTLITKGKTKMFRGQRGQRSDVKKAIVTLEEGQTIDVTTGL</sequence>
<comment type="function">
    <text evidence="1">One of the early assembly proteins it binds 23S rRNA. One of the proteins that surrounds the polypeptide exit tunnel on the outside of the ribosome. Forms the main docking site for trigger factor binding to the ribosome.</text>
</comment>
<comment type="subunit">
    <text evidence="1">Part of the 50S ribosomal subunit. Contacts protein L29, and trigger factor when it is bound to the ribosome.</text>
</comment>
<comment type="similarity">
    <text evidence="1">Belongs to the universal ribosomal protein uL23 family.</text>
</comment>
<gene>
    <name evidence="1" type="primary">rplW</name>
    <name type="ordered locus">M446_0351</name>
</gene>
<keyword id="KW-0687">Ribonucleoprotein</keyword>
<keyword id="KW-0689">Ribosomal protein</keyword>
<keyword id="KW-0694">RNA-binding</keyword>
<keyword id="KW-0699">rRNA-binding</keyword>